<name>GLYA_ECOLC</name>
<accession>B1IVS6</accession>
<evidence type="ECO:0000255" key="1">
    <source>
        <dbReference type="HAMAP-Rule" id="MF_00051"/>
    </source>
</evidence>
<sequence length="417" mass="45317">MLKREMNIADYDAELWQAMEQEKVRQEEHIELIASENYTSPRVMQAQGSQLTNKYAEGYPGKRYYGGCEYVDIVEQLAIDRAKELFGADYANVQPHSGSQANFAVYTALLEPGDTVLGMNLAHGGHLTHGSPVNFSGKLYNIVPYGIDATGHIDYADLEKQAKEHKPKMIIGGFSAYSGVVDWAKMREIADSIGAYLFVDMAHVAGLVAAGVYPNPVPHAHVVTTTTHKTLAGPRGGLILAKGGSEELYKKLNSAVFPGGQGGPLMHVIAGKAVALKEAMEPEFKTYQQQVAKNAKAMVEVFLERGYKVVSGGTDNHLFLVDLVDKNLTGKEADAALGRANITVNKNSVPNDPKSPFVTSGIRVGTPAITRRGFKEAEAKELAGWMCDVLDSINDEAVIERIKGKVLDICARYPVYA</sequence>
<protein>
    <recommendedName>
        <fullName evidence="1">Serine hydroxymethyltransferase</fullName>
        <shortName evidence="1">SHMT</shortName>
        <shortName evidence="1">Serine methylase</shortName>
        <ecNumber evidence="1">2.1.2.1</ecNumber>
    </recommendedName>
</protein>
<dbReference type="EC" id="2.1.2.1" evidence="1"/>
<dbReference type="EMBL" id="CP000946">
    <property type="protein sequence ID" value="ACA76793.1"/>
    <property type="molecule type" value="Genomic_DNA"/>
</dbReference>
<dbReference type="RefSeq" id="WP_000919159.1">
    <property type="nucleotide sequence ID" value="NZ_MTFT01000002.1"/>
</dbReference>
<dbReference type="SMR" id="B1IVS6"/>
<dbReference type="GeneID" id="89517346"/>
<dbReference type="KEGG" id="ecl:EcolC_1126"/>
<dbReference type="HOGENOM" id="CLU_022477_2_1_6"/>
<dbReference type="UniPathway" id="UPA00193"/>
<dbReference type="UniPathway" id="UPA00288">
    <property type="reaction ID" value="UER01023"/>
</dbReference>
<dbReference type="GO" id="GO:0005829">
    <property type="term" value="C:cytosol"/>
    <property type="evidence" value="ECO:0007669"/>
    <property type="project" value="TreeGrafter"/>
</dbReference>
<dbReference type="GO" id="GO:0004372">
    <property type="term" value="F:glycine hydroxymethyltransferase activity"/>
    <property type="evidence" value="ECO:0007669"/>
    <property type="project" value="UniProtKB-UniRule"/>
</dbReference>
<dbReference type="GO" id="GO:0030170">
    <property type="term" value="F:pyridoxal phosphate binding"/>
    <property type="evidence" value="ECO:0007669"/>
    <property type="project" value="UniProtKB-UniRule"/>
</dbReference>
<dbReference type="GO" id="GO:0019264">
    <property type="term" value="P:glycine biosynthetic process from serine"/>
    <property type="evidence" value="ECO:0007669"/>
    <property type="project" value="UniProtKB-UniRule"/>
</dbReference>
<dbReference type="GO" id="GO:0035999">
    <property type="term" value="P:tetrahydrofolate interconversion"/>
    <property type="evidence" value="ECO:0007669"/>
    <property type="project" value="UniProtKB-UniRule"/>
</dbReference>
<dbReference type="CDD" id="cd00378">
    <property type="entry name" value="SHMT"/>
    <property type="match status" value="1"/>
</dbReference>
<dbReference type="FunFam" id="3.40.640.10:FF:000001">
    <property type="entry name" value="Serine hydroxymethyltransferase"/>
    <property type="match status" value="1"/>
</dbReference>
<dbReference type="FunFam" id="3.90.1150.10:FF:000003">
    <property type="entry name" value="Serine hydroxymethyltransferase"/>
    <property type="match status" value="1"/>
</dbReference>
<dbReference type="Gene3D" id="3.90.1150.10">
    <property type="entry name" value="Aspartate Aminotransferase, domain 1"/>
    <property type="match status" value="1"/>
</dbReference>
<dbReference type="Gene3D" id="3.40.640.10">
    <property type="entry name" value="Type I PLP-dependent aspartate aminotransferase-like (Major domain)"/>
    <property type="match status" value="1"/>
</dbReference>
<dbReference type="HAMAP" id="MF_00051">
    <property type="entry name" value="SHMT"/>
    <property type="match status" value="1"/>
</dbReference>
<dbReference type="InterPro" id="IPR015424">
    <property type="entry name" value="PyrdxlP-dep_Trfase"/>
</dbReference>
<dbReference type="InterPro" id="IPR015421">
    <property type="entry name" value="PyrdxlP-dep_Trfase_major"/>
</dbReference>
<dbReference type="InterPro" id="IPR015422">
    <property type="entry name" value="PyrdxlP-dep_Trfase_small"/>
</dbReference>
<dbReference type="InterPro" id="IPR001085">
    <property type="entry name" value="Ser_HO-MeTrfase"/>
</dbReference>
<dbReference type="InterPro" id="IPR049943">
    <property type="entry name" value="Ser_HO-MeTrfase-like"/>
</dbReference>
<dbReference type="InterPro" id="IPR019798">
    <property type="entry name" value="Ser_HO-MeTrfase_PLP_BS"/>
</dbReference>
<dbReference type="InterPro" id="IPR039429">
    <property type="entry name" value="SHMT-like_dom"/>
</dbReference>
<dbReference type="NCBIfam" id="NF000586">
    <property type="entry name" value="PRK00011.1"/>
    <property type="match status" value="1"/>
</dbReference>
<dbReference type="PANTHER" id="PTHR11680">
    <property type="entry name" value="SERINE HYDROXYMETHYLTRANSFERASE"/>
    <property type="match status" value="1"/>
</dbReference>
<dbReference type="PANTHER" id="PTHR11680:SF50">
    <property type="entry name" value="SERINE HYDROXYMETHYLTRANSFERASE"/>
    <property type="match status" value="1"/>
</dbReference>
<dbReference type="Pfam" id="PF00464">
    <property type="entry name" value="SHMT"/>
    <property type="match status" value="1"/>
</dbReference>
<dbReference type="PIRSF" id="PIRSF000412">
    <property type="entry name" value="SHMT"/>
    <property type="match status" value="1"/>
</dbReference>
<dbReference type="SUPFAM" id="SSF53383">
    <property type="entry name" value="PLP-dependent transferases"/>
    <property type="match status" value="1"/>
</dbReference>
<dbReference type="PROSITE" id="PS00096">
    <property type="entry name" value="SHMT"/>
    <property type="match status" value="1"/>
</dbReference>
<reference key="1">
    <citation type="submission" date="2008-02" db="EMBL/GenBank/DDBJ databases">
        <title>Complete sequence of Escherichia coli C str. ATCC 8739.</title>
        <authorList>
            <person name="Copeland A."/>
            <person name="Lucas S."/>
            <person name="Lapidus A."/>
            <person name="Glavina del Rio T."/>
            <person name="Dalin E."/>
            <person name="Tice H."/>
            <person name="Bruce D."/>
            <person name="Goodwin L."/>
            <person name="Pitluck S."/>
            <person name="Kiss H."/>
            <person name="Brettin T."/>
            <person name="Detter J.C."/>
            <person name="Han C."/>
            <person name="Kuske C.R."/>
            <person name="Schmutz J."/>
            <person name="Larimer F."/>
            <person name="Land M."/>
            <person name="Hauser L."/>
            <person name="Kyrpides N."/>
            <person name="Mikhailova N."/>
            <person name="Ingram L."/>
            <person name="Richardson P."/>
        </authorList>
    </citation>
    <scope>NUCLEOTIDE SEQUENCE [LARGE SCALE GENOMIC DNA]</scope>
    <source>
        <strain>ATCC 8739 / DSM 1576 / NBRC 3972 / NCIMB 8545 / WDCM 00012 / Crooks</strain>
    </source>
</reference>
<keyword id="KW-0007">Acetylation</keyword>
<keyword id="KW-0028">Amino-acid biosynthesis</keyword>
<keyword id="KW-0963">Cytoplasm</keyword>
<keyword id="KW-0554">One-carbon metabolism</keyword>
<keyword id="KW-0663">Pyridoxal phosphate</keyword>
<keyword id="KW-0808">Transferase</keyword>
<proteinExistence type="inferred from homology"/>
<comment type="function">
    <text evidence="1">Catalyzes the reversible interconversion of serine and glycine with tetrahydrofolate (THF) serving as the one-carbon carrier. This reaction serves as the major source of one-carbon groups required for the biosynthesis of purines, thymidylate, methionine, and other important biomolecules. Also exhibits THF-independent aldolase activity toward beta-hydroxyamino acids, producing glycine and aldehydes, via a retro-aldol mechanism.</text>
</comment>
<comment type="catalytic activity">
    <reaction evidence="1">
        <text>(6R)-5,10-methylene-5,6,7,8-tetrahydrofolate + glycine + H2O = (6S)-5,6,7,8-tetrahydrofolate + L-serine</text>
        <dbReference type="Rhea" id="RHEA:15481"/>
        <dbReference type="ChEBI" id="CHEBI:15377"/>
        <dbReference type="ChEBI" id="CHEBI:15636"/>
        <dbReference type="ChEBI" id="CHEBI:33384"/>
        <dbReference type="ChEBI" id="CHEBI:57305"/>
        <dbReference type="ChEBI" id="CHEBI:57453"/>
        <dbReference type="EC" id="2.1.2.1"/>
    </reaction>
</comment>
<comment type="cofactor">
    <cofactor evidence="1">
        <name>pyridoxal 5'-phosphate</name>
        <dbReference type="ChEBI" id="CHEBI:597326"/>
    </cofactor>
</comment>
<comment type="pathway">
    <text evidence="1">One-carbon metabolism; tetrahydrofolate interconversion.</text>
</comment>
<comment type="pathway">
    <text evidence="1">Amino-acid biosynthesis; glycine biosynthesis; glycine from L-serine: step 1/1.</text>
</comment>
<comment type="subunit">
    <text evidence="1">Homodimer.</text>
</comment>
<comment type="subcellular location">
    <subcellularLocation>
        <location evidence="1">Cytoplasm</location>
    </subcellularLocation>
</comment>
<comment type="similarity">
    <text evidence="1">Belongs to the SHMT family.</text>
</comment>
<gene>
    <name evidence="1" type="primary">glyA</name>
    <name type="ordered locus">EcolC_1126</name>
</gene>
<organism>
    <name type="scientific">Escherichia coli (strain ATCC 8739 / DSM 1576 / NBRC 3972 / NCIMB 8545 / WDCM 00012 / Crooks)</name>
    <dbReference type="NCBI Taxonomy" id="481805"/>
    <lineage>
        <taxon>Bacteria</taxon>
        <taxon>Pseudomonadati</taxon>
        <taxon>Pseudomonadota</taxon>
        <taxon>Gammaproteobacteria</taxon>
        <taxon>Enterobacterales</taxon>
        <taxon>Enterobacteriaceae</taxon>
        <taxon>Escherichia</taxon>
    </lineage>
</organism>
<feature type="chain" id="PRO_1000074895" description="Serine hydroxymethyltransferase">
    <location>
        <begin position="1"/>
        <end position="417"/>
    </location>
</feature>
<feature type="binding site" evidence="1">
    <location>
        <position position="121"/>
    </location>
    <ligand>
        <name>(6S)-5,6,7,8-tetrahydrofolate</name>
        <dbReference type="ChEBI" id="CHEBI:57453"/>
    </ligand>
</feature>
<feature type="binding site" evidence="1">
    <location>
        <begin position="125"/>
        <end position="127"/>
    </location>
    <ligand>
        <name>(6S)-5,6,7,8-tetrahydrofolate</name>
        <dbReference type="ChEBI" id="CHEBI:57453"/>
    </ligand>
</feature>
<feature type="binding site" evidence="1">
    <location>
        <begin position="355"/>
        <end position="357"/>
    </location>
    <ligand>
        <name>(6S)-5,6,7,8-tetrahydrofolate</name>
        <dbReference type="ChEBI" id="CHEBI:57453"/>
    </ligand>
</feature>
<feature type="site" description="Plays an important role in substrate specificity" evidence="1">
    <location>
        <position position="228"/>
    </location>
</feature>
<feature type="modified residue" description="N6-acetyllysine" evidence="1">
    <location>
        <position position="54"/>
    </location>
</feature>
<feature type="modified residue" description="N6-(pyridoxal phosphate)lysine" evidence="1">
    <location>
        <position position="229"/>
    </location>
</feature>
<feature type="modified residue" description="N6-acetyllysine" evidence="1">
    <location>
        <position position="250"/>
    </location>
</feature>
<feature type="modified residue" description="N6-acetyllysine" evidence="1">
    <location>
        <position position="285"/>
    </location>
</feature>
<feature type="modified residue" description="N6-acetyllysine" evidence="1">
    <location>
        <position position="354"/>
    </location>
</feature>
<feature type="modified residue" description="N6-acetyllysine" evidence="1">
    <location>
        <position position="375"/>
    </location>
</feature>